<sequence>MKDVTIIGGGPSGLYASFYAGLRDMSVRLIDVQSELGGKMRIYPEKIIWDIGGIAPKPCHEILKDTIKQGLYFKPEVHLNERVVDIRKKAERHFEVETEAGEIYTSKAVIIAIGAGIINPKQLDVKGVERYQLTNLHYVVQSYRRFKDKDVLISGGGNTALDWAHDIAKIAKSVTVVYRKEDVSGHEAMKTLVTDLNVKLCPKTRIKYLVGNDDETHISEVVLEHVESGDTHTVKFDDVIISHGFDRCNTLLSETSSKLDMHDDCRVKGFGNTTTSIPGIYACGDIVYHDAKSHLIASAFSDGANAANLAKTYIQPDANAEGYVSSHHEVFKEANKTIVNKHLY</sequence>
<dbReference type="EC" id="1.18.1.2" evidence="1"/>
<dbReference type="EMBL" id="BX571857">
    <property type="protein sequence ID" value="CAG44077.1"/>
    <property type="molecule type" value="Genomic_DNA"/>
</dbReference>
<dbReference type="RefSeq" id="WP_000655972.1">
    <property type="nucleotide sequence ID" value="NC_002953.3"/>
</dbReference>
<dbReference type="SMR" id="Q6G6U7"/>
<dbReference type="KEGG" id="sas:SAS2264"/>
<dbReference type="HOGENOM" id="CLU_031864_5_5_9"/>
<dbReference type="GO" id="GO:0004324">
    <property type="term" value="F:ferredoxin-NADP+ reductase activity"/>
    <property type="evidence" value="ECO:0007669"/>
    <property type="project" value="UniProtKB-UniRule"/>
</dbReference>
<dbReference type="GO" id="GO:0050660">
    <property type="term" value="F:flavin adenine dinucleotide binding"/>
    <property type="evidence" value="ECO:0007669"/>
    <property type="project" value="UniProtKB-UniRule"/>
</dbReference>
<dbReference type="GO" id="GO:0050661">
    <property type="term" value="F:NADP binding"/>
    <property type="evidence" value="ECO:0007669"/>
    <property type="project" value="UniProtKB-UniRule"/>
</dbReference>
<dbReference type="Gene3D" id="3.50.50.60">
    <property type="entry name" value="FAD/NAD(P)-binding domain"/>
    <property type="match status" value="2"/>
</dbReference>
<dbReference type="HAMAP" id="MF_01685">
    <property type="entry name" value="FENR2"/>
    <property type="match status" value="1"/>
</dbReference>
<dbReference type="InterPro" id="IPR036188">
    <property type="entry name" value="FAD/NAD-bd_sf"/>
</dbReference>
<dbReference type="InterPro" id="IPR023753">
    <property type="entry name" value="FAD/NAD-binding_dom"/>
</dbReference>
<dbReference type="InterPro" id="IPR022890">
    <property type="entry name" value="Fd--NADP_Rdtase_type_2"/>
</dbReference>
<dbReference type="InterPro" id="IPR050097">
    <property type="entry name" value="Ferredoxin-NADP_redctase_2"/>
</dbReference>
<dbReference type="PANTHER" id="PTHR48105">
    <property type="entry name" value="THIOREDOXIN REDUCTASE 1-RELATED-RELATED"/>
    <property type="match status" value="1"/>
</dbReference>
<dbReference type="Pfam" id="PF07992">
    <property type="entry name" value="Pyr_redox_2"/>
    <property type="match status" value="1"/>
</dbReference>
<dbReference type="PRINTS" id="PR00368">
    <property type="entry name" value="FADPNR"/>
</dbReference>
<dbReference type="PRINTS" id="PR00469">
    <property type="entry name" value="PNDRDTASEII"/>
</dbReference>
<dbReference type="SUPFAM" id="SSF51905">
    <property type="entry name" value="FAD/NAD(P)-binding domain"/>
    <property type="match status" value="1"/>
</dbReference>
<gene>
    <name type="ordered locus">SAS2264</name>
</gene>
<protein>
    <recommendedName>
        <fullName evidence="1">Ferredoxin--NADP reductase</fullName>
        <shortName evidence="1">FNR</shortName>
        <shortName evidence="1">Fd-NADP(+) reductase</shortName>
        <ecNumber evidence="1">1.18.1.2</ecNumber>
    </recommendedName>
</protein>
<reference key="1">
    <citation type="journal article" date="2004" name="Proc. Natl. Acad. Sci. U.S.A.">
        <title>Complete genomes of two clinical Staphylococcus aureus strains: evidence for the rapid evolution of virulence and drug resistance.</title>
        <authorList>
            <person name="Holden M.T.G."/>
            <person name="Feil E.J."/>
            <person name="Lindsay J.A."/>
            <person name="Peacock S.J."/>
            <person name="Day N.P.J."/>
            <person name="Enright M.C."/>
            <person name="Foster T.J."/>
            <person name="Moore C.E."/>
            <person name="Hurst L."/>
            <person name="Atkin R."/>
            <person name="Barron A."/>
            <person name="Bason N."/>
            <person name="Bentley S.D."/>
            <person name="Chillingworth C."/>
            <person name="Chillingworth T."/>
            <person name="Churcher C."/>
            <person name="Clark L."/>
            <person name="Corton C."/>
            <person name="Cronin A."/>
            <person name="Doggett J."/>
            <person name="Dowd L."/>
            <person name="Feltwell T."/>
            <person name="Hance Z."/>
            <person name="Harris B."/>
            <person name="Hauser H."/>
            <person name="Holroyd S."/>
            <person name="Jagels K."/>
            <person name="James K.D."/>
            <person name="Lennard N."/>
            <person name="Line A."/>
            <person name="Mayes R."/>
            <person name="Moule S."/>
            <person name="Mungall K."/>
            <person name="Ormond D."/>
            <person name="Quail M.A."/>
            <person name="Rabbinowitsch E."/>
            <person name="Rutherford K.M."/>
            <person name="Sanders M."/>
            <person name="Sharp S."/>
            <person name="Simmonds M."/>
            <person name="Stevens K."/>
            <person name="Whitehead S."/>
            <person name="Barrell B.G."/>
            <person name="Spratt B.G."/>
            <person name="Parkhill J."/>
        </authorList>
    </citation>
    <scope>NUCLEOTIDE SEQUENCE [LARGE SCALE GENOMIC DNA]</scope>
    <source>
        <strain>MSSA476</strain>
    </source>
</reference>
<accession>Q6G6U7</accession>
<feature type="chain" id="PRO_0000364939" description="Ferredoxin--NADP reductase">
    <location>
        <begin position="1"/>
        <end position="344"/>
    </location>
</feature>
<feature type="binding site" evidence="1">
    <location>
        <position position="12"/>
    </location>
    <ligand>
        <name>FAD</name>
        <dbReference type="ChEBI" id="CHEBI:57692"/>
    </ligand>
</feature>
<feature type="binding site" evidence="1">
    <location>
        <position position="31"/>
    </location>
    <ligand>
        <name>FAD</name>
        <dbReference type="ChEBI" id="CHEBI:57692"/>
    </ligand>
</feature>
<feature type="binding site" evidence="1">
    <location>
        <position position="39"/>
    </location>
    <ligand>
        <name>FAD</name>
        <dbReference type="ChEBI" id="CHEBI:57692"/>
    </ligand>
</feature>
<feature type="binding site" evidence="1">
    <location>
        <position position="43"/>
    </location>
    <ligand>
        <name>FAD</name>
        <dbReference type="ChEBI" id="CHEBI:57692"/>
    </ligand>
</feature>
<feature type="binding site" evidence="1">
    <location>
        <position position="83"/>
    </location>
    <ligand>
        <name>FAD</name>
        <dbReference type="ChEBI" id="CHEBI:57692"/>
    </ligand>
</feature>
<feature type="binding site" evidence="1">
    <location>
        <position position="118"/>
    </location>
    <ligand>
        <name>FAD</name>
        <dbReference type="ChEBI" id="CHEBI:57692"/>
    </ligand>
</feature>
<feature type="binding site" evidence="1">
    <location>
        <position position="285"/>
    </location>
    <ligand>
        <name>FAD</name>
        <dbReference type="ChEBI" id="CHEBI:57692"/>
    </ligand>
</feature>
<feature type="binding site" evidence="1">
    <location>
        <position position="326"/>
    </location>
    <ligand>
        <name>FAD</name>
        <dbReference type="ChEBI" id="CHEBI:57692"/>
    </ligand>
</feature>
<organism>
    <name type="scientific">Staphylococcus aureus (strain MSSA476)</name>
    <dbReference type="NCBI Taxonomy" id="282459"/>
    <lineage>
        <taxon>Bacteria</taxon>
        <taxon>Bacillati</taxon>
        <taxon>Bacillota</taxon>
        <taxon>Bacilli</taxon>
        <taxon>Bacillales</taxon>
        <taxon>Staphylococcaceae</taxon>
        <taxon>Staphylococcus</taxon>
    </lineage>
</organism>
<name>FENR_STAAS</name>
<comment type="catalytic activity">
    <reaction evidence="1">
        <text>2 reduced [2Fe-2S]-[ferredoxin] + NADP(+) + H(+) = 2 oxidized [2Fe-2S]-[ferredoxin] + NADPH</text>
        <dbReference type="Rhea" id="RHEA:20125"/>
        <dbReference type="Rhea" id="RHEA-COMP:10000"/>
        <dbReference type="Rhea" id="RHEA-COMP:10001"/>
        <dbReference type="ChEBI" id="CHEBI:15378"/>
        <dbReference type="ChEBI" id="CHEBI:33737"/>
        <dbReference type="ChEBI" id="CHEBI:33738"/>
        <dbReference type="ChEBI" id="CHEBI:57783"/>
        <dbReference type="ChEBI" id="CHEBI:58349"/>
        <dbReference type="EC" id="1.18.1.2"/>
    </reaction>
</comment>
<comment type="cofactor">
    <cofactor evidence="1">
        <name>FAD</name>
        <dbReference type="ChEBI" id="CHEBI:57692"/>
    </cofactor>
    <text evidence="1">Binds 1 FAD per subunit.</text>
</comment>
<comment type="subunit">
    <text evidence="1">Homodimer.</text>
</comment>
<comment type="similarity">
    <text evidence="1">Belongs to the ferredoxin--NADP reductase type 2 family.</text>
</comment>
<keyword id="KW-0274">FAD</keyword>
<keyword id="KW-0285">Flavoprotein</keyword>
<keyword id="KW-0521">NADP</keyword>
<keyword id="KW-0560">Oxidoreductase</keyword>
<proteinExistence type="inferred from homology"/>
<evidence type="ECO:0000255" key="1">
    <source>
        <dbReference type="HAMAP-Rule" id="MF_01685"/>
    </source>
</evidence>